<accession>A1WFS9</accession>
<gene>
    <name evidence="1" type="primary">hisE</name>
    <name type="ordered locus">Veis_0704</name>
</gene>
<protein>
    <recommendedName>
        <fullName evidence="1">Phosphoribosyl-ATP pyrophosphatase</fullName>
        <shortName evidence="1">PRA-PH</shortName>
        <ecNumber evidence="1">3.6.1.31</ecNumber>
    </recommendedName>
</protein>
<sequence>MPDDDLQHRSQDILARLAAVIESRKIAHGGDPTKSYVARLLHQGPDAFLKKIGEEATEVVMAAKDADHGADKAKIICEVADLWFHCMVALAHYGLTPDQVLAELQRRAGSSGIEEKALRKLLGRGSADQARESP</sequence>
<organism>
    <name type="scientific">Verminephrobacter eiseniae (strain EF01-2)</name>
    <dbReference type="NCBI Taxonomy" id="391735"/>
    <lineage>
        <taxon>Bacteria</taxon>
        <taxon>Pseudomonadati</taxon>
        <taxon>Pseudomonadota</taxon>
        <taxon>Betaproteobacteria</taxon>
        <taxon>Burkholderiales</taxon>
        <taxon>Comamonadaceae</taxon>
        <taxon>Verminephrobacter</taxon>
    </lineage>
</organism>
<reference key="1">
    <citation type="submission" date="2006-12" db="EMBL/GenBank/DDBJ databases">
        <title>Complete sequence of chromosome 1 of Verminephrobacter eiseniae EF01-2.</title>
        <authorList>
            <person name="Copeland A."/>
            <person name="Lucas S."/>
            <person name="Lapidus A."/>
            <person name="Barry K."/>
            <person name="Detter J.C."/>
            <person name="Glavina del Rio T."/>
            <person name="Dalin E."/>
            <person name="Tice H."/>
            <person name="Pitluck S."/>
            <person name="Chertkov O."/>
            <person name="Brettin T."/>
            <person name="Bruce D."/>
            <person name="Han C."/>
            <person name="Tapia R."/>
            <person name="Gilna P."/>
            <person name="Schmutz J."/>
            <person name="Larimer F."/>
            <person name="Land M."/>
            <person name="Hauser L."/>
            <person name="Kyrpides N."/>
            <person name="Kim E."/>
            <person name="Stahl D."/>
            <person name="Richardson P."/>
        </authorList>
    </citation>
    <scope>NUCLEOTIDE SEQUENCE [LARGE SCALE GENOMIC DNA]</scope>
    <source>
        <strain>EF01-2</strain>
    </source>
</reference>
<dbReference type="EC" id="3.6.1.31" evidence="1"/>
<dbReference type="EMBL" id="CP000542">
    <property type="protein sequence ID" value="ABM56486.1"/>
    <property type="molecule type" value="Genomic_DNA"/>
</dbReference>
<dbReference type="RefSeq" id="WP_011808500.1">
    <property type="nucleotide sequence ID" value="NC_008786.1"/>
</dbReference>
<dbReference type="SMR" id="A1WFS9"/>
<dbReference type="STRING" id="391735.Veis_0704"/>
<dbReference type="GeneID" id="76459400"/>
<dbReference type="KEGG" id="vei:Veis_0704"/>
<dbReference type="eggNOG" id="COG0140">
    <property type="taxonomic scope" value="Bacteria"/>
</dbReference>
<dbReference type="HOGENOM" id="CLU_123337_1_2_4"/>
<dbReference type="OrthoDB" id="9814738at2"/>
<dbReference type="UniPathway" id="UPA00031">
    <property type="reaction ID" value="UER00007"/>
</dbReference>
<dbReference type="Proteomes" id="UP000000374">
    <property type="component" value="Chromosome"/>
</dbReference>
<dbReference type="GO" id="GO:0005737">
    <property type="term" value="C:cytoplasm"/>
    <property type="evidence" value="ECO:0007669"/>
    <property type="project" value="UniProtKB-SubCell"/>
</dbReference>
<dbReference type="GO" id="GO:0005524">
    <property type="term" value="F:ATP binding"/>
    <property type="evidence" value="ECO:0007669"/>
    <property type="project" value="UniProtKB-KW"/>
</dbReference>
<dbReference type="GO" id="GO:0004636">
    <property type="term" value="F:phosphoribosyl-ATP diphosphatase activity"/>
    <property type="evidence" value="ECO:0007669"/>
    <property type="project" value="UniProtKB-UniRule"/>
</dbReference>
<dbReference type="GO" id="GO:0000105">
    <property type="term" value="P:L-histidine biosynthetic process"/>
    <property type="evidence" value="ECO:0007669"/>
    <property type="project" value="UniProtKB-UniRule"/>
</dbReference>
<dbReference type="CDD" id="cd11534">
    <property type="entry name" value="NTP-PPase_HisIE_like"/>
    <property type="match status" value="1"/>
</dbReference>
<dbReference type="Gene3D" id="1.10.287.1080">
    <property type="entry name" value="MazG-like"/>
    <property type="match status" value="1"/>
</dbReference>
<dbReference type="HAMAP" id="MF_01020">
    <property type="entry name" value="HisE"/>
    <property type="match status" value="1"/>
</dbReference>
<dbReference type="InterPro" id="IPR008179">
    <property type="entry name" value="HisE"/>
</dbReference>
<dbReference type="InterPro" id="IPR021130">
    <property type="entry name" value="PRib-ATP_PPHydrolase-like"/>
</dbReference>
<dbReference type="NCBIfam" id="TIGR03188">
    <property type="entry name" value="histidine_hisI"/>
    <property type="match status" value="1"/>
</dbReference>
<dbReference type="NCBIfam" id="NF001611">
    <property type="entry name" value="PRK00400.1-3"/>
    <property type="match status" value="1"/>
</dbReference>
<dbReference type="PANTHER" id="PTHR42945">
    <property type="entry name" value="HISTIDINE BIOSYNTHESIS BIFUNCTIONAL PROTEIN"/>
    <property type="match status" value="1"/>
</dbReference>
<dbReference type="PANTHER" id="PTHR42945:SF9">
    <property type="entry name" value="HISTIDINE BIOSYNTHESIS BIFUNCTIONAL PROTEIN HISIE"/>
    <property type="match status" value="1"/>
</dbReference>
<dbReference type="Pfam" id="PF01503">
    <property type="entry name" value="PRA-PH"/>
    <property type="match status" value="1"/>
</dbReference>
<dbReference type="SUPFAM" id="SSF101386">
    <property type="entry name" value="all-alpha NTP pyrophosphatases"/>
    <property type="match status" value="1"/>
</dbReference>
<evidence type="ECO:0000255" key="1">
    <source>
        <dbReference type="HAMAP-Rule" id="MF_01020"/>
    </source>
</evidence>
<feature type="chain" id="PRO_0000319669" description="Phosphoribosyl-ATP pyrophosphatase">
    <location>
        <begin position="1"/>
        <end position="134"/>
    </location>
</feature>
<name>HIS2_VEREI</name>
<keyword id="KW-0028">Amino-acid biosynthesis</keyword>
<keyword id="KW-0067">ATP-binding</keyword>
<keyword id="KW-0963">Cytoplasm</keyword>
<keyword id="KW-0368">Histidine biosynthesis</keyword>
<keyword id="KW-0378">Hydrolase</keyword>
<keyword id="KW-0547">Nucleotide-binding</keyword>
<keyword id="KW-1185">Reference proteome</keyword>
<proteinExistence type="inferred from homology"/>
<comment type="catalytic activity">
    <reaction evidence="1">
        <text>1-(5-phospho-beta-D-ribosyl)-ATP + H2O = 1-(5-phospho-beta-D-ribosyl)-5'-AMP + diphosphate + H(+)</text>
        <dbReference type="Rhea" id="RHEA:22828"/>
        <dbReference type="ChEBI" id="CHEBI:15377"/>
        <dbReference type="ChEBI" id="CHEBI:15378"/>
        <dbReference type="ChEBI" id="CHEBI:33019"/>
        <dbReference type="ChEBI" id="CHEBI:59457"/>
        <dbReference type="ChEBI" id="CHEBI:73183"/>
        <dbReference type="EC" id="3.6.1.31"/>
    </reaction>
</comment>
<comment type="pathway">
    <text evidence="1">Amino-acid biosynthesis; L-histidine biosynthesis; L-histidine from 5-phospho-alpha-D-ribose 1-diphosphate: step 2/9.</text>
</comment>
<comment type="subcellular location">
    <subcellularLocation>
        <location evidence="1">Cytoplasm</location>
    </subcellularLocation>
</comment>
<comment type="similarity">
    <text evidence="1">Belongs to the PRA-PH family.</text>
</comment>